<protein>
    <recommendedName>
        <fullName evidence="1">Cysteine--tRNA ligase</fullName>
        <ecNumber evidence="1">6.1.1.16</ecNumber>
    </recommendedName>
    <alternativeName>
        <fullName evidence="1">Cysteinyl-tRNA synthetase</fullName>
        <shortName evidence="1">CysRS</shortName>
    </alternativeName>
</protein>
<dbReference type="EC" id="6.1.1.16" evidence="1"/>
<dbReference type="EMBL" id="CP000423">
    <property type="protein sequence ID" value="ABJ71052.1"/>
    <property type="status" value="ALT_INIT"/>
    <property type="molecule type" value="Genomic_DNA"/>
</dbReference>
<dbReference type="RefSeq" id="WP_003659543.1">
    <property type="nucleotide sequence ID" value="NC_008526.1"/>
</dbReference>
<dbReference type="RefSeq" id="YP_807494.1">
    <property type="nucleotide sequence ID" value="NC_008526.1"/>
</dbReference>
<dbReference type="SMR" id="Q035S0"/>
<dbReference type="STRING" id="321967.LSEI_2308"/>
<dbReference type="PaxDb" id="321967-LSEI_2308"/>
<dbReference type="GeneID" id="57090921"/>
<dbReference type="KEGG" id="lca:LSEI_2308"/>
<dbReference type="PATRIC" id="fig|321967.11.peg.2270"/>
<dbReference type="HOGENOM" id="CLU_013528_0_3_9"/>
<dbReference type="Proteomes" id="UP000001651">
    <property type="component" value="Chromosome"/>
</dbReference>
<dbReference type="GO" id="GO:0005829">
    <property type="term" value="C:cytosol"/>
    <property type="evidence" value="ECO:0007669"/>
    <property type="project" value="TreeGrafter"/>
</dbReference>
<dbReference type="GO" id="GO:0005524">
    <property type="term" value="F:ATP binding"/>
    <property type="evidence" value="ECO:0007669"/>
    <property type="project" value="UniProtKB-UniRule"/>
</dbReference>
<dbReference type="GO" id="GO:0004817">
    <property type="term" value="F:cysteine-tRNA ligase activity"/>
    <property type="evidence" value="ECO:0007669"/>
    <property type="project" value="UniProtKB-UniRule"/>
</dbReference>
<dbReference type="GO" id="GO:0008270">
    <property type="term" value="F:zinc ion binding"/>
    <property type="evidence" value="ECO:0007669"/>
    <property type="project" value="UniProtKB-UniRule"/>
</dbReference>
<dbReference type="GO" id="GO:0006423">
    <property type="term" value="P:cysteinyl-tRNA aminoacylation"/>
    <property type="evidence" value="ECO:0007669"/>
    <property type="project" value="UniProtKB-UniRule"/>
</dbReference>
<dbReference type="CDD" id="cd00672">
    <property type="entry name" value="CysRS_core"/>
    <property type="match status" value="1"/>
</dbReference>
<dbReference type="FunFam" id="3.40.50.620:FF:000009">
    <property type="entry name" value="Cysteine--tRNA ligase"/>
    <property type="match status" value="1"/>
</dbReference>
<dbReference type="Gene3D" id="1.20.120.1910">
    <property type="entry name" value="Cysteine-tRNA ligase, C-terminal anti-codon recognition domain"/>
    <property type="match status" value="1"/>
</dbReference>
<dbReference type="Gene3D" id="3.40.50.620">
    <property type="entry name" value="HUPs"/>
    <property type="match status" value="1"/>
</dbReference>
<dbReference type="HAMAP" id="MF_00041">
    <property type="entry name" value="Cys_tRNA_synth"/>
    <property type="match status" value="1"/>
</dbReference>
<dbReference type="InterPro" id="IPR015803">
    <property type="entry name" value="Cys-tRNA-ligase"/>
</dbReference>
<dbReference type="InterPro" id="IPR015273">
    <property type="entry name" value="Cys-tRNA-synt_Ia_DALR"/>
</dbReference>
<dbReference type="InterPro" id="IPR024909">
    <property type="entry name" value="Cys-tRNA/MSH_ligase"/>
</dbReference>
<dbReference type="InterPro" id="IPR056411">
    <property type="entry name" value="CysS_C"/>
</dbReference>
<dbReference type="InterPro" id="IPR014729">
    <property type="entry name" value="Rossmann-like_a/b/a_fold"/>
</dbReference>
<dbReference type="InterPro" id="IPR032678">
    <property type="entry name" value="tRNA-synt_1_cat_dom"/>
</dbReference>
<dbReference type="InterPro" id="IPR009080">
    <property type="entry name" value="tRNAsynth_Ia_anticodon-bd"/>
</dbReference>
<dbReference type="NCBIfam" id="TIGR00435">
    <property type="entry name" value="cysS"/>
    <property type="match status" value="1"/>
</dbReference>
<dbReference type="PANTHER" id="PTHR10890:SF3">
    <property type="entry name" value="CYSTEINE--TRNA LIGASE, CYTOPLASMIC"/>
    <property type="match status" value="1"/>
</dbReference>
<dbReference type="PANTHER" id="PTHR10890">
    <property type="entry name" value="CYSTEINYL-TRNA SYNTHETASE"/>
    <property type="match status" value="1"/>
</dbReference>
<dbReference type="Pfam" id="PF23493">
    <property type="entry name" value="CysS_C"/>
    <property type="match status" value="1"/>
</dbReference>
<dbReference type="Pfam" id="PF09190">
    <property type="entry name" value="DALR_2"/>
    <property type="match status" value="1"/>
</dbReference>
<dbReference type="Pfam" id="PF01406">
    <property type="entry name" value="tRNA-synt_1e"/>
    <property type="match status" value="1"/>
</dbReference>
<dbReference type="PRINTS" id="PR00983">
    <property type="entry name" value="TRNASYNTHCYS"/>
</dbReference>
<dbReference type="SMART" id="SM00840">
    <property type="entry name" value="DALR_2"/>
    <property type="match status" value="1"/>
</dbReference>
<dbReference type="SUPFAM" id="SSF47323">
    <property type="entry name" value="Anticodon-binding domain of a subclass of class I aminoacyl-tRNA synthetases"/>
    <property type="match status" value="1"/>
</dbReference>
<dbReference type="SUPFAM" id="SSF52374">
    <property type="entry name" value="Nucleotidylyl transferase"/>
    <property type="match status" value="1"/>
</dbReference>
<sequence length="468" mass="53502">MLTLYNTMSRKKETFTPLHPGEIRMYVCGPTVYNYIHIGNARSAIAFDTIRRYFEYRGYKVTYVSNFTDVDDKIINAAHKTGEAPLDLAQRFIDAFMEDTTALGIEPATAHPRASQMIPDIIEFVQDLIDKEYAYAVDGDVYYRARKFKHYGELSHQNVDELEEGASQHITQDELAKKEDPIDFALWKAAKPGEISWESPWGKGRPGWHIECSVMSTKLLGDTFDIHGGGQDLEFPHHENEIAQSEAKTDKQFVRYWMHNGFVTIGEDDEKMSKSLGNFITVHDIRKTVDPQVLRFFMAGTQYRMPIRYSETNLKNAANSLNRLKIARENLTYRRRGAETGVDPQITKQLQTLKDRFVTAMDDDINVQNGLTVLFDLAKLLNEYANEETVKSESINDLLNEYDAWLQIFGVVFADQKSLDADIDALVKARDAARAAKDFAKSDQIRDQLAAQGIILEDTPQGTRWRRQ</sequence>
<proteinExistence type="inferred from homology"/>
<organism>
    <name type="scientific">Lacticaseibacillus paracasei (strain ATCC 334 / BCRC 17002 / CCUG 31169 / CIP 107868 / KCTC 3260 / NRRL B-441)</name>
    <name type="common">Lactobacillus paracasei</name>
    <dbReference type="NCBI Taxonomy" id="321967"/>
    <lineage>
        <taxon>Bacteria</taxon>
        <taxon>Bacillati</taxon>
        <taxon>Bacillota</taxon>
        <taxon>Bacilli</taxon>
        <taxon>Lactobacillales</taxon>
        <taxon>Lactobacillaceae</taxon>
        <taxon>Lacticaseibacillus</taxon>
    </lineage>
</organism>
<gene>
    <name evidence="1" type="primary">cysS</name>
    <name type="ordered locus">LSEI_2308</name>
</gene>
<comment type="catalytic activity">
    <reaction evidence="1">
        <text>tRNA(Cys) + L-cysteine + ATP = L-cysteinyl-tRNA(Cys) + AMP + diphosphate</text>
        <dbReference type="Rhea" id="RHEA:17773"/>
        <dbReference type="Rhea" id="RHEA-COMP:9661"/>
        <dbReference type="Rhea" id="RHEA-COMP:9679"/>
        <dbReference type="ChEBI" id="CHEBI:30616"/>
        <dbReference type="ChEBI" id="CHEBI:33019"/>
        <dbReference type="ChEBI" id="CHEBI:35235"/>
        <dbReference type="ChEBI" id="CHEBI:78442"/>
        <dbReference type="ChEBI" id="CHEBI:78517"/>
        <dbReference type="ChEBI" id="CHEBI:456215"/>
        <dbReference type="EC" id="6.1.1.16"/>
    </reaction>
</comment>
<comment type="cofactor">
    <cofactor evidence="1">
        <name>Zn(2+)</name>
        <dbReference type="ChEBI" id="CHEBI:29105"/>
    </cofactor>
    <text evidence="1">Binds 1 zinc ion per subunit.</text>
</comment>
<comment type="subunit">
    <text evidence="1">Monomer.</text>
</comment>
<comment type="subcellular location">
    <subcellularLocation>
        <location evidence="1">Cytoplasm</location>
    </subcellularLocation>
</comment>
<comment type="similarity">
    <text evidence="1">Belongs to the class-I aminoacyl-tRNA synthetase family.</text>
</comment>
<comment type="sequence caution" evidence="2">
    <conflict type="erroneous initiation">
        <sequence resource="EMBL-CDS" id="ABJ71052"/>
    </conflict>
</comment>
<keyword id="KW-0030">Aminoacyl-tRNA synthetase</keyword>
<keyword id="KW-0067">ATP-binding</keyword>
<keyword id="KW-0963">Cytoplasm</keyword>
<keyword id="KW-0436">Ligase</keyword>
<keyword id="KW-0479">Metal-binding</keyword>
<keyword id="KW-0547">Nucleotide-binding</keyword>
<keyword id="KW-0648">Protein biosynthesis</keyword>
<keyword id="KW-1185">Reference proteome</keyword>
<keyword id="KW-0862">Zinc</keyword>
<feature type="chain" id="PRO_0000332837" description="Cysteine--tRNA ligase">
    <location>
        <begin position="1"/>
        <end position="468"/>
    </location>
</feature>
<feature type="short sequence motif" description="'HIGH' region">
    <location>
        <begin position="30"/>
        <end position="40"/>
    </location>
</feature>
<feature type="short sequence motif" description="'KMSKS' region">
    <location>
        <begin position="271"/>
        <end position="275"/>
    </location>
</feature>
<feature type="binding site" evidence="1">
    <location>
        <position position="28"/>
    </location>
    <ligand>
        <name>Zn(2+)</name>
        <dbReference type="ChEBI" id="CHEBI:29105"/>
    </ligand>
</feature>
<feature type="binding site" evidence="1">
    <location>
        <position position="212"/>
    </location>
    <ligand>
        <name>Zn(2+)</name>
        <dbReference type="ChEBI" id="CHEBI:29105"/>
    </ligand>
</feature>
<feature type="binding site" evidence="1">
    <location>
        <position position="237"/>
    </location>
    <ligand>
        <name>Zn(2+)</name>
        <dbReference type="ChEBI" id="CHEBI:29105"/>
    </ligand>
</feature>
<feature type="binding site" evidence="1">
    <location>
        <position position="241"/>
    </location>
    <ligand>
        <name>Zn(2+)</name>
        <dbReference type="ChEBI" id="CHEBI:29105"/>
    </ligand>
</feature>
<feature type="binding site" evidence="1">
    <location>
        <position position="274"/>
    </location>
    <ligand>
        <name>ATP</name>
        <dbReference type="ChEBI" id="CHEBI:30616"/>
    </ligand>
</feature>
<reference key="1">
    <citation type="journal article" date="2006" name="Proc. Natl. Acad. Sci. U.S.A.">
        <title>Comparative genomics of the lactic acid bacteria.</title>
        <authorList>
            <person name="Makarova K.S."/>
            <person name="Slesarev A."/>
            <person name="Wolf Y.I."/>
            <person name="Sorokin A."/>
            <person name="Mirkin B."/>
            <person name="Koonin E.V."/>
            <person name="Pavlov A."/>
            <person name="Pavlova N."/>
            <person name="Karamychev V."/>
            <person name="Polouchine N."/>
            <person name="Shakhova V."/>
            <person name="Grigoriev I."/>
            <person name="Lou Y."/>
            <person name="Rohksar D."/>
            <person name="Lucas S."/>
            <person name="Huang K."/>
            <person name="Goodstein D.M."/>
            <person name="Hawkins T."/>
            <person name="Plengvidhya V."/>
            <person name="Welker D."/>
            <person name="Hughes J."/>
            <person name="Goh Y."/>
            <person name="Benson A."/>
            <person name="Baldwin K."/>
            <person name="Lee J.-H."/>
            <person name="Diaz-Muniz I."/>
            <person name="Dosti B."/>
            <person name="Smeianov V."/>
            <person name="Wechter W."/>
            <person name="Barabote R."/>
            <person name="Lorca G."/>
            <person name="Altermann E."/>
            <person name="Barrangou R."/>
            <person name="Ganesan B."/>
            <person name="Xie Y."/>
            <person name="Rawsthorne H."/>
            <person name="Tamir D."/>
            <person name="Parker C."/>
            <person name="Breidt F."/>
            <person name="Broadbent J.R."/>
            <person name="Hutkins R."/>
            <person name="O'Sullivan D."/>
            <person name="Steele J."/>
            <person name="Unlu G."/>
            <person name="Saier M.H. Jr."/>
            <person name="Klaenhammer T."/>
            <person name="Richardson P."/>
            <person name="Kozyavkin S."/>
            <person name="Weimer B.C."/>
            <person name="Mills D.A."/>
        </authorList>
    </citation>
    <scope>NUCLEOTIDE SEQUENCE [LARGE SCALE GENOMIC DNA]</scope>
    <source>
        <strain>ATCC 334 / BCRC 17002 / CCUG 31169 / CIP 107868 / KCTC 3260 / NRRL B-441</strain>
    </source>
</reference>
<evidence type="ECO:0000255" key="1">
    <source>
        <dbReference type="HAMAP-Rule" id="MF_00041"/>
    </source>
</evidence>
<evidence type="ECO:0000305" key="2"/>
<name>SYC_LACP3</name>
<accession>Q035S0</accession>